<dbReference type="EMBL" id="AY580326">
    <property type="protein sequence ID" value="AAS93429.1"/>
    <property type="molecule type" value="mRNA"/>
</dbReference>
<dbReference type="ConoServer" id="854">
    <property type="toxin name" value="Mi5.2 precursor"/>
</dbReference>
<dbReference type="GO" id="GO:0005576">
    <property type="term" value="C:extracellular region"/>
    <property type="evidence" value="ECO:0007669"/>
    <property type="project" value="UniProtKB-SubCell"/>
</dbReference>
<dbReference type="GO" id="GO:0090729">
    <property type="term" value="F:toxin activity"/>
    <property type="evidence" value="ECO:0007669"/>
    <property type="project" value="UniProtKB-KW"/>
</dbReference>
<dbReference type="InterPro" id="IPR031565">
    <property type="entry name" value="T-conotoxin"/>
</dbReference>
<dbReference type="Pfam" id="PF16981">
    <property type="entry name" value="Chi-conotoxin"/>
    <property type="match status" value="1"/>
</dbReference>
<accession>Q6PTD0</accession>
<comment type="subcellular location">
    <subcellularLocation>
        <location evidence="4">Secreted</location>
    </subcellularLocation>
</comment>
<comment type="tissue specificity">
    <text evidence="4">Expressed by the venom duct.</text>
</comment>
<comment type="domain">
    <text evidence="3">The cysteine framework is V (CC-CC).</text>
</comment>
<comment type="PTM">
    <text evidence="3">Contains 2 disulfide bonds that can be either 'C1-C3, C2-C4' or 'C1-C4, C2-C3', since these disulfide connectivities have been observed for conotoxins with cysteine framework V (for examples, see AC P0DQQ7 and AC P81755).</text>
</comment>
<comment type="similarity">
    <text evidence="3">Belongs to the conotoxin T superfamily.</text>
</comment>
<proteinExistence type="inferred from homology"/>
<organism>
    <name type="scientific">Conus miles</name>
    <name type="common">Soldier cone</name>
    <name type="synonym">Mile cone</name>
    <dbReference type="NCBI Taxonomy" id="69564"/>
    <lineage>
        <taxon>Eukaryota</taxon>
        <taxon>Metazoa</taxon>
        <taxon>Spiralia</taxon>
        <taxon>Lophotrochozoa</taxon>
        <taxon>Mollusca</taxon>
        <taxon>Gastropoda</taxon>
        <taxon>Caenogastropoda</taxon>
        <taxon>Neogastropoda</taxon>
        <taxon>Conoidea</taxon>
        <taxon>Conidae</taxon>
        <taxon>Conus</taxon>
        <taxon>Rhizoconus</taxon>
    </lineage>
</organism>
<sequence length="62" mass="6923">MRCVPVFIILLLLIPSASSVDVQPLTRDDVPLASFLDDARRTLRSPWMTRRCCPGNFACCGK</sequence>
<evidence type="ECO:0000250" key="1"/>
<evidence type="ECO:0000255" key="2"/>
<evidence type="ECO:0000305" key="3"/>
<evidence type="ECO:0000305" key="4">
    <source ref="1"/>
</evidence>
<evidence type="ECO:0000312" key="5">
    <source>
        <dbReference type="EMBL" id="AAS93429.1"/>
    </source>
</evidence>
<reference key="1">
    <citation type="submission" date="2004-03" db="EMBL/GenBank/DDBJ databases">
        <authorList>
            <person name="Wang Q."/>
            <person name="Jiang H."/>
            <person name="Han Y.H."/>
            <person name="Chen J.S."/>
            <person name="Chi C.W."/>
        </authorList>
    </citation>
    <scope>NUCLEOTIDE SEQUENCE [MRNA]</scope>
    <source>
        <tissue>Venom duct</tissue>
    </source>
</reference>
<feature type="signal peptide" evidence="2">
    <location>
        <begin position="1"/>
        <end position="19"/>
    </location>
</feature>
<feature type="propeptide" id="PRO_0000274071" evidence="1">
    <location>
        <begin position="20"/>
        <end position="50"/>
    </location>
</feature>
<feature type="peptide" id="PRO_0000274072" description="Conotoxin Mi5.2">
    <location>
        <begin position="52"/>
        <end position="60"/>
    </location>
</feature>
<name>CT52_CONMI</name>
<protein>
    <recommendedName>
        <fullName evidence="3">Conotoxin Mi5.2</fullName>
    </recommendedName>
    <alternativeName>
        <fullName evidence="5">Conotoxin Mi T-1</fullName>
    </alternativeName>
</protein>
<keyword id="KW-0165">Cleavage on pair of basic residues</keyword>
<keyword id="KW-1015">Disulfide bond</keyword>
<keyword id="KW-0964">Secreted</keyword>
<keyword id="KW-0732">Signal</keyword>
<keyword id="KW-0800">Toxin</keyword>